<accession>Q39238</accession>
<accession>Q8LPL1</accession>
<gene>
    <name type="primary">TOUSLED</name>
    <name type="synonym">TSL</name>
    <name type="ordered locus">At5g20930</name>
    <name type="ORF">F22D1.100</name>
</gene>
<name>TSL_ARATH</name>
<organism>
    <name type="scientific">Arabidopsis thaliana</name>
    <name type="common">Mouse-ear cress</name>
    <dbReference type="NCBI Taxonomy" id="3702"/>
    <lineage>
        <taxon>Eukaryota</taxon>
        <taxon>Viridiplantae</taxon>
        <taxon>Streptophyta</taxon>
        <taxon>Embryophyta</taxon>
        <taxon>Tracheophyta</taxon>
        <taxon>Spermatophyta</taxon>
        <taxon>Magnoliopsida</taxon>
        <taxon>eudicotyledons</taxon>
        <taxon>Gunneridae</taxon>
        <taxon>Pentapetalae</taxon>
        <taxon>rosids</taxon>
        <taxon>malvids</taxon>
        <taxon>Brassicales</taxon>
        <taxon>Brassicaceae</taxon>
        <taxon>Camelineae</taxon>
        <taxon>Arabidopsis</taxon>
    </lineage>
</organism>
<evidence type="ECO:0000255" key="1"/>
<evidence type="ECO:0000255" key="2">
    <source>
        <dbReference type="PROSITE-ProRule" id="PRU00159"/>
    </source>
</evidence>
<evidence type="ECO:0000255" key="3">
    <source>
        <dbReference type="PROSITE-ProRule" id="PRU10027"/>
    </source>
</evidence>
<evidence type="ECO:0000256" key="4">
    <source>
        <dbReference type="SAM" id="MobiDB-lite"/>
    </source>
</evidence>
<evidence type="ECO:0000269" key="5">
    <source>
    </source>
</evidence>
<evidence type="ECO:0000269" key="6">
    <source>
    </source>
</evidence>
<evidence type="ECO:0000269" key="7">
    <source>
    </source>
</evidence>
<evidence type="ECO:0000305" key="8"/>
<keyword id="KW-0067">ATP-binding</keyword>
<keyword id="KW-0175">Coiled coil</keyword>
<keyword id="KW-0418">Kinase</keyword>
<keyword id="KW-0547">Nucleotide-binding</keyword>
<keyword id="KW-0539">Nucleus</keyword>
<keyword id="KW-0597">Phosphoprotein</keyword>
<keyword id="KW-1185">Reference proteome</keyword>
<keyword id="KW-0723">Serine/threonine-protein kinase</keyword>
<keyword id="KW-0808">Transferase</keyword>
<feature type="chain" id="PRO_0000270795" description="Serine/threonine-protein kinase TOUSLED">
    <location>
        <begin position="1"/>
        <end position="688"/>
    </location>
</feature>
<feature type="domain" description="Protein kinase" evidence="2">
    <location>
        <begin position="409"/>
        <end position="683"/>
    </location>
</feature>
<feature type="region of interest" description="Disordered" evidence="4">
    <location>
        <begin position="1"/>
        <end position="196"/>
    </location>
</feature>
<feature type="region of interest" description="Disordered" evidence="4">
    <location>
        <begin position="326"/>
        <end position="348"/>
    </location>
</feature>
<feature type="coiled-coil region" evidence="1">
    <location>
        <begin position="194"/>
        <end position="253"/>
    </location>
</feature>
<feature type="coiled-coil region" evidence="1">
    <location>
        <begin position="298"/>
        <end position="332"/>
    </location>
</feature>
<feature type="short sequence motif" description="Nuclear localization signal" evidence="1">
    <location>
        <begin position="97"/>
        <end position="100"/>
    </location>
</feature>
<feature type="short sequence motif" description="Nuclear localization signal" evidence="1">
    <location>
        <begin position="123"/>
        <end position="139"/>
    </location>
</feature>
<feature type="short sequence motif" description="Nuclear localization signal" evidence="1">
    <location>
        <begin position="389"/>
        <end position="392"/>
    </location>
</feature>
<feature type="compositionally biased region" description="Low complexity" evidence="4">
    <location>
        <begin position="10"/>
        <end position="19"/>
    </location>
</feature>
<feature type="compositionally biased region" description="Basic and acidic residues" evidence="4">
    <location>
        <begin position="20"/>
        <end position="32"/>
    </location>
</feature>
<feature type="compositionally biased region" description="Low complexity" evidence="4">
    <location>
        <begin position="35"/>
        <end position="70"/>
    </location>
</feature>
<feature type="compositionally biased region" description="Basic and acidic residues" evidence="4">
    <location>
        <begin position="111"/>
        <end position="137"/>
    </location>
</feature>
<feature type="compositionally biased region" description="Polar residues" evidence="4">
    <location>
        <begin position="155"/>
        <end position="164"/>
    </location>
</feature>
<feature type="compositionally biased region" description="Basic and acidic residues" evidence="4">
    <location>
        <begin position="179"/>
        <end position="188"/>
    </location>
</feature>
<feature type="active site" description="Proton acceptor" evidence="2 3">
    <location>
        <position position="539"/>
    </location>
</feature>
<feature type="binding site" evidence="2">
    <location>
        <begin position="415"/>
        <end position="423"/>
    </location>
    <ligand>
        <name>ATP</name>
        <dbReference type="ChEBI" id="CHEBI:30616"/>
    </ligand>
</feature>
<feature type="binding site" evidence="2">
    <location>
        <position position="438"/>
    </location>
    <ligand>
        <name>ATP</name>
        <dbReference type="ChEBI" id="CHEBI:30616"/>
    </ligand>
</feature>
<feature type="mutagenesis site" description="In tsl-2; loss of activity resulting in an aberrant floral development." evidence="6">
    <original>V</original>
    <variation>D</variation>
    <location>
        <position position="355"/>
    </location>
</feature>
<feature type="mutagenesis site" description="Loss of activity." evidence="7">
    <original>K</original>
    <variation>E</variation>
    <location>
        <position position="438"/>
    </location>
</feature>
<protein>
    <recommendedName>
        <fullName>Serine/threonine-protein kinase TOUSLED</fullName>
        <ecNumber>2.7.11.1</ecNumber>
    </recommendedName>
</protein>
<reference key="1">
    <citation type="journal article" date="1993" name="Cell">
        <title>The TOUSLED gene in Arabidopsis thaliana encodes a protein kinase homologue that is required for leaf and flower development.</title>
        <authorList>
            <person name="Roe J.L."/>
            <person name="Rivin C.J."/>
            <person name="Sessions R.A.L."/>
            <person name="Feldmann K.A."/>
            <person name="Zambryski P.C."/>
        </authorList>
    </citation>
    <scope>NUCLEOTIDE SEQUENCE [MRNA]</scope>
    <scope>MUTAGENESIS OF VAL-355</scope>
    <scope>FUNCTION</scope>
    <scope>TISSUE SPECIFICITY</scope>
    <source>
        <strain>cv. Columbia</strain>
        <strain>cv. Wassilewskija</strain>
        <tissue>Flower</tissue>
    </source>
</reference>
<reference key="2">
    <citation type="journal article" date="2000" name="Nature">
        <title>Sequence and analysis of chromosome 5 of the plant Arabidopsis thaliana.</title>
        <authorList>
            <person name="Tabata S."/>
            <person name="Kaneko T."/>
            <person name="Nakamura Y."/>
            <person name="Kotani H."/>
            <person name="Kato T."/>
            <person name="Asamizu E."/>
            <person name="Miyajima N."/>
            <person name="Sasamoto S."/>
            <person name="Kimura T."/>
            <person name="Hosouchi T."/>
            <person name="Kawashima K."/>
            <person name="Kohara M."/>
            <person name="Matsumoto M."/>
            <person name="Matsuno A."/>
            <person name="Muraki A."/>
            <person name="Nakayama S."/>
            <person name="Nakazaki N."/>
            <person name="Naruo K."/>
            <person name="Okumura S."/>
            <person name="Shinpo S."/>
            <person name="Takeuchi C."/>
            <person name="Wada T."/>
            <person name="Watanabe A."/>
            <person name="Yamada M."/>
            <person name="Yasuda M."/>
            <person name="Sato S."/>
            <person name="de la Bastide M."/>
            <person name="Huang E."/>
            <person name="Spiegel L."/>
            <person name="Gnoj L."/>
            <person name="O'Shaughnessy A."/>
            <person name="Preston R."/>
            <person name="Habermann K."/>
            <person name="Murray J."/>
            <person name="Johnson D."/>
            <person name="Rohlfing T."/>
            <person name="Nelson J."/>
            <person name="Stoneking T."/>
            <person name="Pepin K."/>
            <person name="Spieth J."/>
            <person name="Sekhon M."/>
            <person name="Armstrong J."/>
            <person name="Becker M."/>
            <person name="Belter E."/>
            <person name="Cordum H."/>
            <person name="Cordes M."/>
            <person name="Courtney L."/>
            <person name="Courtney W."/>
            <person name="Dante M."/>
            <person name="Du H."/>
            <person name="Edwards J."/>
            <person name="Fryman J."/>
            <person name="Haakensen B."/>
            <person name="Lamar E."/>
            <person name="Latreille P."/>
            <person name="Leonard S."/>
            <person name="Meyer R."/>
            <person name="Mulvaney E."/>
            <person name="Ozersky P."/>
            <person name="Riley A."/>
            <person name="Strowmatt C."/>
            <person name="Wagner-McPherson C."/>
            <person name="Wollam A."/>
            <person name="Yoakum M."/>
            <person name="Bell M."/>
            <person name="Dedhia N."/>
            <person name="Parnell L."/>
            <person name="Shah R."/>
            <person name="Rodriguez M."/>
            <person name="Hoon See L."/>
            <person name="Vil D."/>
            <person name="Baker J."/>
            <person name="Kirchoff K."/>
            <person name="Toth K."/>
            <person name="King L."/>
            <person name="Bahret A."/>
            <person name="Miller B."/>
            <person name="Marra M.A."/>
            <person name="Martienssen R."/>
            <person name="McCombie W.R."/>
            <person name="Wilson R.K."/>
            <person name="Murphy G."/>
            <person name="Bancroft I."/>
            <person name="Volckaert G."/>
            <person name="Wambutt R."/>
            <person name="Duesterhoeft A."/>
            <person name="Stiekema W."/>
            <person name="Pohl T."/>
            <person name="Entian K.-D."/>
            <person name="Terryn N."/>
            <person name="Hartley N."/>
            <person name="Bent E."/>
            <person name="Johnson S."/>
            <person name="Langham S.-A."/>
            <person name="McCullagh B."/>
            <person name="Robben J."/>
            <person name="Grymonprez B."/>
            <person name="Zimmermann W."/>
            <person name="Ramsperger U."/>
            <person name="Wedler H."/>
            <person name="Balke K."/>
            <person name="Wedler E."/>
            <person name="Peters S."/>
            <person name="van Staveren M."/>
            <person name="Dirkse W."/>
            <person name="Mooijman P."/>
            <person name="Klein Lankhorst R."/>
            <person name="Weitzenegger T."/>
            <person name="Bothe G."/>
            <person name="Rose M."/>
            <person name="Hauf J."/>
            <person name="Berneiser S."/>
            <person name="Hempel S."/>
            <person name="Feldpausch M."/>
            <person name="Lamberth S."/>
            <person name="Villarroel R."/>
            <person name="Gielen J."/>
            <person name="Ardiles W."/>
            <person name="Bents O."/>
            <person name="Lemcke K."/>
            <person name="Kolesov G."/>
            <person name="Mayer K.F.X."/>
            <person name="Rudd S."/>
            <person name="Schoof H."/>
            <person name="Schueller C."/>
            <person name="Zaccaria P."/>
            <person name="Mewes H.-W."/>
            <person name="Bevan M."/>
            <person name="Fransz P.F."/>
        </authorList>
    </citation>
    <scope>NUCLEOTIDE SEQUENCE [LARGE SCALE GENOMIC DNA]</scope>
    <source>
        <strain>cv. Columbia</strain>
    </source>
</reference>
<reference key="3">
    <citation type="journal article" date="2017" name="Plant J.">
        <title>Araport11: a complete reannotation of the Arabidopsis thaliana reference genome.</title>
        <authorList>
            <person name="Cheng C.Y."/>
            <person name="Krishnakumar V."/>
            <person name="Chan A.P."/>
            <person name="Thibaud-Nissen F."/>
            <person name="Schobel S."/>
            <person name="Town C.D."/>
        </authorList>
    </citation>
    <scope>GENOME REANNOTATION</scope>
    <source>
        <strain>cv. Columbia</strain>
    </source>
</reference>
<reference key="4">
    <citation type="journal article" date="2003" name="Science">
        <title>Empirical analysis of transcriptional activity in the Arabidopsis genome.</title>
        <authorList>
            <person name="Yamada K."/>
            <person name="Lim J."/>
            <person name="Dale J.M."/>
            <person name="Chen H."/>
            <person name="Shinn P."/>
            <person name="Palm C.J."/>
            <person name="Southwick A.M."/>
            <person name="Wu H.C."/>
            <person name="Kim C.J."/>
            <person name="Nguyen M."/>
            <person name="Pham P.K."/>
            <person name="Cheuk R.F."/>
            <person name="Karlin-Newmann G."/>
            <person name="Liu S.X."/>
            <person name="Lam B."/>
            <person name="Sakano H."/>
            <person name="Wu T."/>
            <person name="Yu G."/>
            <person name="Miranda M."/>
            <person name="Quach H.L."/>
            <person name="Tripp M."/>
            <person name="Chang C.H."/>
            <person name="Lee J.M."/>
            <person name="Toriumi M.J."/>
            <person name="Chan M.M."/>
            <person name="Tang C.C."/>
            <person name="Onodera C.S."/>
            <person name="Deng J.M."/>
            <person name="Akiyama K."/>
            <person name="Ansari Y."/>
            <person name="Arakawa T."/>
            <person name="Banh J."/>
            <person name="Banno F."/>
            <person name="Bowser L."/>
            <person name="Brooks S.Y."/>
            <person name="Carninci P."/>
            <person name="Chao Q."/>
            <person name="Choy N."/>
            <person name="Enju A."/>
            <person name="Goldsmith A.D."/>
            <person name="Gurjal M."/>
            <person name="Hansen N.F."/>
            <person name="Hayashizaki Y."/>
            <person name="Johnson-Hopson C."/>
            <person name="Hsuan V.W."/>
            <person name="Iida K."/>
            <person name="Karnes M."/>
            <person name="Khan S."/>
            <person name="Koesema E."/>
            <person name="Ishida J."/>
            <person name="Jiang P.X."/>
            <person name="Jones T."/>
            <person name="Kawai J."/>
            <person name="Kamiya A."/>
            <person name="Meyers C."/>
            <person name="Nakajima M."/>
            <person name="Narusaka M."/>
            <person name="Seki M."/>
            <person name="Sakurai T."/>
            <person name="Satou M."/>
            <person name="Tamse R."/>
            <person name="Vaysberg M."/>
            <person name="Wallender E.K."/>
            <person name="Wong C."/>
            <person name="Yamamura Y."/>
            <person name="Yuan S."/>
            <person name="Shinozaki K."/>
            <person name="Davis R.W."/>
            <person name="Theologis A."/>
            <person name="Ecker J.R."/>
        </authorList>
    </citation>
    <scope>NUCLEOTIDE SEQUENCE [LARGE SCALE MRNA] OF 218-688</scope>
    <source>
        <strain>cv. Columbia</strain>
    </source>
</reference>
<reference key="5">
    <citation type="journal article" date="1997" name="J. Biol. Chem.">
        <title>TOUSLED is a nuclear serine/threonine protein kinase that requires a coiled-coil region for oligomerization and catalytic activity.</title>
        <authorList>
            <person name="Roe J.L."/>
            <person name="Durfee T."/>
            <person name="Zupan J.R."/>
            <person name="Repetti P.P."/>
            <person name="McLean B.G."/>
            <person name="Zambryski P.C."/>
        </authorList>
    </citation>
    <scope>CHARACTERIZATION</scope>
    <scope>MUTAGENESIS OF LYS-438</scope>
    <scope>SUBUNIT</scope>
    <scope>PHOSPHORYLATION</scope>
    <scope>SUBCELLULAR LOCATION</scope>
</reference>
<reference key="6">
    <citation type="journal article" date="2004" name="Plant Physiol.">
        <title>TOUSLED kinase activity oscillates during the cell cycle and interacts with chromatin regulators.</title>
        <authorList>
            <person name="Ehsan H."/>
            <person name="Reichheld J.-P."/>
            <person name="Durfee T."/>
            <person name="Roe J.L."/>
        </authorList>
    </citation>
    <scope>FUNCTION</scope>
    <scope>DEVELOPMENTAL STAGE</scope>
    <scope>INTERACTION WITH TKI1 AND ASF1B/SGA1</scope>
</reference>
<sequence>MSDDMVLHFSSNSSNQSDHSLPDKIAKLEARLTGKTPSSAKPPQQQQQQQQQVSLWSSASAAVKVVTSTPPGLSETSISDSDDENTGDFLIRANTKKRQKVQESNNFSVVDHVEPQEAAYDGRKNDAESKTGLDVSKKKQGRGRASSTGRGRGSKTNNDVTKSQFVVAPVSAASQLDASDQKDFRPDGQLRNGECSLQDEDLKSLRAKIAMLEEELRKSRQDSSEYHHLVRNLENEVKDLKDQEQQGKQKTTKVISDLLISVSKTERQEARTKVRNESLRLGSVGVLRTGTIIAETWEDGQMLKDLNAQLRQLLETKEAIERQRKLLKKRQNGDKNDGTDTESGAQEEDIIPDEVYKSRLTSIKREEEAVLRERERYTLEKGLLMREMKRIRDEDGSRFNHFPVLNSRYALLNLLGKGGFSEVYKAYDLVDHRYVACKLHGLNAQWSEEKKQSYIRHANRECEIHKSLVHHHIVRLWDKFHIDMHTFCTVLEYCSGKDLDAVLKATSNLPEKEARIIIVQIVQGLVYLNKKSQKIIHYDLKPGNVLFDEFGVAKVTDFGLSKIVEDNVGSQGMELTSQGAGTYWYLPPECFELNKTPMISSKVDVWSVGVLFYQMLFGKRPFGHDQSQERILREDTIIKAKKVEFPVTRPAISNEAKDLIRRCLTYNQEDRPDVLTMAQDPYLAYSKK</sequence>
<comment type="function">
    <text evidence="5 6">Required for correct initiation of floral organ primordia and for proper development of organ primordia. Phosphorylates in vitro ASF1B/SGA1, the C-terminal part of TKI1 and histone H3.</text>
</comment>
<comment type="catalytic activity">
    <reaction>
        <text>L-seryl-[protein] + ATP = O-phospho-L-seryl-[protein] + ADP + H(+)</text>
        <dbReference type="Rhea" id="RHEA:17989"/>
        <dbReference type="Rhea" id="RHEA-COMP:9863"/>
        <dbReference type="Rhea" id="RHEA-COMP:11604"/>
        <dbReference type="ChEBI" id="CHEBI:15378"/>
        <dbReference type="ChEBI" id="CHEBI:29999"/>
        <dbReference type="ChEBI" id="CHEBI:30616"/>
        <dbReference type="ChEBI" id="CHEBI:83421"/>
        <dbReference type="ChEBI" id="CHEBI:456216"/>
        <dbReference type="EC" id="2.7.11.1"/>
    </reaction>
</comment>
<comment type="catalytic activity">
    <reaction>
        <text>L-threonyl-[protein] + ATP = O-phospho-L-threonyl-[protein] + ADP + H(+)</text>
        <dbReference type="Rhea" id="RHEA:46608"/>
        <dbReference type="Rhea" id="RHEA-COMP:11060"/>
        <dbReference type="Rhea" id="RHEA-COMP:11605"/>
        <dbReference type="ChEBI" id="CHEBI:15378"/>
        <dbReference type="ChEBI" id="CHEBI:30013"/>
        <dbReference type="ChEBI" id="CHEBI:30616"/>
        <dbReference type="ChEBI" id="CHEBI:61977"/>
        <dbReference type="ChEBI" id="CHEBI:456216"/>
        <dbReference type="EC" id="2.7.11.1"/>
    </reaction>
</comment>
<comment type="cofactor">
    <cofactor>
        <name>Mg(2+)</name>
        <dbReference type="ChEBI" id="CHEBI:18420"/>
    </cofactor>
    <cofactor>
        <name>Mn(2+)</name>
        <dbReference type="ChEBI" id="CHEBI:29035"/>
    </cofactor>
</comment>
<comment type="activity regulation">
    <text>Oligomerization is required for activity. May be activated by trans-autophosphorylation. Higher activity during G2/M phase and G1 phase compared to S phase.</text>
</comment>
<comment type="subunit">
    <text evidence="5 7">Homooligomer. Interacts with TKI1 and ASF1B/SGA1.</text>
</comment>
<comment type="interaction">
    <interactant intactId="EBI-2325484">
        <id>Q39238</id>
    </interactant>
    <interactant intactId="EBI-2366572">
        <id>Q9LS09</id>
        <label>ASF1B</label>
    </interactant>
    <organismsDiffer>false</organismsDiffer>
    <experiments>2</experiments>
</comment>
<comment type="interaction">
    <interactant intactId="EBI-2325484">
        <id>Q39238</id>
    </interactant>
    <interactant intactId="EBI-2366507">
        <id>Q8LJT8</id>
        <label>TKI1</label>
    </interactant>
    <organismsDiffer>false</organismsDiffer>
    <experiments>4</experiments>
</comment>
<comment type="interaction">
    <interactant intactId="EBI-2325484">
        <id>Q39238</id>
    </interactant>
    <interactant intactId="EBI-2325484">
        <id>Q39238</id>
        <label>TOUSLED</label>
    </interactant>
    <organismsDiffer>false</organismsDiffer>
    <experiments>2</experiments>
</comment>
<comment type="subcellular location">
    <subcellularLocation>
        <location evidence="7">Nucleus</location>
    </subcellularLocation>
</comment>
<comment type="tissue specificity">
    <text evidence="6">Most abundant in developing floral meristem. Also expressed in maturing flowers, developing seeds, mature leaves and roots. Barely detected in stems.</text>
</comment>
<comment type="developmental stage">
    <text evidence="5">Expressed at constant level during the cell cycle.</text>
</comment>
<comment type="domain">
    <text>The first coiled coil domain is essential for oligomerization.</text>
</comment>
<comment type="PTM">
    <text evidence="7">Autophosphorylation on both phosphoserine and phosphothreonine.</text>
</comment>
<comment type="similarity">
    <text evidence="2">Belongs to the protein kinase superfamily. Ser/Thr protein kinase family.</text>
</comment>
<comment type="sequence caution" evidence="8">
    <conflict type="erroneous initiation">
        <sequence resource="EMBL-CDS" id="AAM20455"/>
    </conflict>
</comment>
<proteinExistence type="evidence at protein level"/>
<dbReference type="EC" id="2.7.11.1"/>
<dbReference type="EMBL" id="L23985">
    <property type="protein sequence ID" value="AAA32874.1"/>
    <property type="molecule type" value="mRNA"/>
</dbReference>
<dbReference type="EMBL" id="AF296834">
    <property type="status" value="NOT_ANNOTATED_CDS"/>
    <property type="molecule type" value="Genomic_DNA"/>
</dbReference>
<dbReference type="EMBL" id="CP002688">
    <property type="protein sequence ID" value="AED92907.1"/>
    <property type="molecule type" value="Genomic_DNA"/>
</dbReference>
<dbReference type="EMBL" id="AY099604">
    <property type="protein sequence ID" value="AAM20455.1"/>
    <property type="status" value="ALT_INIT"/>
    <property type="molecule type" value="mRNA"/>
</dbReference>
<dbReference type="EMBL" id="BT000260">
    <property type="protein sequence ID" value="AAN15579.1"/>
    <property type="molecule type" value="mRNA"/>
</dbReference>
<dbReference type="PIR" id="A49318">
    <property type="entry name" value="A49318"/>
</dbReference>
<dbReference type="RefSeq" id="NP_568405.1">
    <property type="nucleotide sequence ID" value="NM_122101.2"/>
</dbReference>
<dbReference type="SMR" id="Q39238"/>
<dbReference type="BioGRID" id="17492">
    <property type="interactions" value="3"/>
</dbReference>
<dbReference type="FunCoup" id="Q39238">
    <property type="interactions" value="4120"/>
</dbReference>
<dbReference type="IntAct" id="Q39238">
    <property type="interactions" value="2"/>
</dbReference>
<dbReference type="STRING" id="3702.Q39238"/>
<dbReference type="iPTMnet" id="Q39238"/>
<dbReference type="PaxDb" id="3702-AT5G20930.1"/>
<dbReference type="ProteomicsDB" id="234594"/>
<dbReference type="EnsemblPlants" id="AT5G20930.1">
    <property type="protein sequence ID" value="AT5G20930.1"/>
    <property type="gene ID" value="AT5G20930"/>
</dbReference>
<dbReference type="GeneID" id="832217"/>
<dbReference type="Gramene" id="AT5G20930.1">
    <property type="protein sequence ID" value="AT5G20930.1"/>
    <property type="gene ID" value="AT5G20930"/>
</dbReference>
<dbReference type="KEGG" id="ath:AT5G20930"/>
<dbReference type="Araport" id="AT5G20930"/>
<dbReference type="TAIR" id="AT5G20930">
    <property type="gene designation" value="TSL"/>
</dbReference>
<dbReference type="eggNOG" id="KOG1151">
    <property type="taxonomic scope" value="Eukaryota"/>
</dbReference>
<dbReference type="HOGENOM" id="CLU_000288_85_0_1"/>
<dbReference type="InParanoid" id="Q39238"/>
<dbReference type="OMA" id="MEYSIQD"/>
<dbReference type="OrthoDB" id="346907at2759"/>
<dbReference type="PhylomeDB" id="Q39238"/>
<dbReference type="CD-CODE" id="4299E36E">
    <property type="entry name" value="Nucleolus"/>
</dbReference>
<dbReference type="PRO" id="PR:Q39238"/>
<dbReference type="Proteomes" id="UP000006548">
    <property type="component" value="Chromosome 5"/>
</dbReference>
<dbReference type="ExpressionAtlas" id="Q39238">
    <property type="expression patterns" value="baseline and differential"/>
</dbReference>
<dbReference type="GO" id="GO:0005737">
    <property type="term" value="C:cytoplasm"/>
    <property type="evidence" value="ECO:0007005"/>
    <property type="project" value="TAIR"/>
</dbReference>
<dbReference type="GO" id="GO:0005634">
    <property type="term" value="C:nucleus"/>
    <property type="evidence" value="ECO:0000314"/>
    <property type="project" value="TAIR"/>
</dbReference>
<dbReference type="GO" id="GO:0005524">
    <property type="term" value="F:ATP binding"/>
    <property type="evidence" value="ECO:0007669"/>
    <property type="project" value="UniProtKB-KW"/>
</dbReference>
<dbReference type="GO" id="GO:0042802">
    <property type="term" value="F:identical protein binding"/>
    <property type="evidence" value="ECO:0000353"/>
    <property type="project" value="IntAct"/>
</dbReference>
<dbReference type="GO" id="GO:0106310">
    <property type="term" value="F:protein serine kinase activity"/>
    <property type="evidence" value="ECO:0007669"/>
    <property type="project" value="RHEA"/>
</dbReference>
<dbReference type="GO" id="GO:0004674">
    <property type="term" value="F:protein serine/threonine kinase activity"/>
    <property type="evidence" value="ECO:0000314"/>
    <property type="project" value="TAIR"/>
</dbReference>
<dbReference type="GO" id="GO:1900368">
    <property type="term" value="P:regulation of post-transcriptional gene silencing by regulatory ncRNA"/>
    <property type="evidence" value="ECO:0000315"/>
    <property type="project" value="TAIR"/>
</dbReference>
<dbReference type="CDD" id="cd13990">
    <property type="entry name" value="STKc_TLK"/>
    <property type="match status" value="1"/>
</dbReference>
<dbReference type="FunFam" id="1.10.510.10:FF:000256">
    <property type="entry name" value="Serine/threonine-protein kinase TOUSLED"/>
    <property type="match status" value="1"/>
</dbReference>
<dbReference type="Gene3D" id="1.10.510.10">
    <property type="entry name" value="Transferase(Phosphotransferase) domain 1"/>
    <property type="match status" value="1"/>
</dbReference>
<dbReference type="InterPro" id="IPR011009">
    <property type="entry name" value="Kinase-like_dom_sf"/>
</dbReference>
<dbReference type="InterPro" id="IPR000719">
    <property type="entry name" value="Prot_kinase_dom"/>
</dbReference>
<dbReference type="InterPro" id="IPR017441">
    <property type="entry name" value="Protein_kinase_ATP_BS"/>
</dbReference>
<dbReference type="InterPro" id="IPR008271">
    <property type="entry name" value="Ser/Thr_kinase_AS"/>
</dbReference>
<dbReference type="PANTHER" id="PTHR22974">
    <property type="entry name" value="MIXED LINEAGE PROTEIN KINASE"/>
    <property type="match status" value="1"/>
</dbReference>
<dbReference type="PANTHER" id="PTHR22974:SF23">
    <property type="entry name" value="TOUSLED-LIKE KINASE, ISOFORM G"/>
    <property type="match status" value="1"/>
</dbReference>
<dbReference type="Pfam" id="PF00069">
    <property type="entry name" value="Pkinase"/>
    <property type="match status" value="1"/>
</dbReference>
<dbReference type="SMART" id="SM00220">
    <property type="entry name" value="S_TKc"/>
    <property type="match status" value="1"/>
</dbReference>
<dbReference type="SUPFAM" id="SSF56112">
    <property type="entry name" value="Protein kinase-like (PK-like)"/>
    <property type="match status" value="1"/>
</dbReference>
<dbReference type="PROSITE" id="PS00107">
    <property type="entry name" value="PROTEIN_KINASE_ATP"/>
    <property type="match status" value="1"/>
</dbReference>
<dbReference type="PROSITE" id="PS50011">
    <property type="entry name" value="PROTEIN_KINASE_DOM"/>
    <property type="match status" value="1"/>
</dbReference>
<dbReference type="PROSITE" id="PS00108">
    <property type="entry name" value="PROTEIN_KINASE_ST"/>
    <property type="match status" value="1"/>
</dbReference>